<proteinExistence type="inferred from homology"/>
<name>SYFA_PELTS</name>
<sequence length="342" mass="38521">MLERLQEICEEARAALNGACSLEELNEIRIRYLGKKGELTRVLRSMGSLSAEERPRIGQAANEIRDFIEKELAARTAALKEMVKEQKLRGDKIDVTLPGMPLPGGGKHPLTLVLEEIQRIFLGLGYSIVEGPEVETDYYNFEALNLPKDHPARDMQDTFFIGGEILLRTHTSPVQVRTMEKTAPGLPVKIIVPGKVYRRDDDATHSPMFHQVEGLAVDRRITFSDLKGTLDLFAREMFGPQTRTRFRPSYFPFTEPSAEVDISCVMCGGRGCRVCSQTGWLEILGSGMVHPRVLEVSGYNSEEVTGFAFGMGVERIAMLKYGIDDMRLLFENDLRFLQQFRS</sequence>
<accession>A5D0U1</accession>
<reference key="1">
    <citation type="journal article" date="2008" name="Genome Res.">
        <title>The genome of Pelotomaculum thermopropionicum reveals niche-associated evolution in anaerobic microbiota.</title>
        <authorList>
            <person name="Kosaka T."/>
            <person name="Kato S."/>
            <person name="Shimoyama T."/>
            <person name="Ishii S."/>
            <person name="Abe T."/>
            <person name="Watanabe K."/>
        </authorList>
    </citation>
    <scope>NUCLEOTIDE SEQUENCE [LARGE SCALE GENOMIC DNA]</scope>
    <source>
        <strain>DSM 13744 / JCM 10971 / SI</strain>
    </source>
</reference>
<gene>
    <name evidence="1" type="primary">pheS</name>
    <name type="ordered locus">PTH_1950</name>
</gene>
<feature type="chain" id="PRO_1000078845" description="Phenylalanine--tRNA ligase alpha subunit">
    <location>
        <begin position="1"/>
        <end position="342"/>
    </location>
</feature>
<feature type="binding site" evidence="1">
    <location>
        <position position="255"/>
    </location>
    <ligand>
        <name>Mg(2+)</name>
        <dbReference type="ChEBI" id="CHEBI:18420"/>
        <note>shared with beta subunit</note>
    </ligand>
</feature>
<keyword id="KW-0030">Aminoacyl-tRNA synthetase</keyword>
<keyword id="KW-0067">ATP-binding</keyword>
<keyword id="KW-0963">Cytoplasm</keyword>
<keyword id="KW-0436">Ligase</keyword>
<keyword id="KW-0460">Magnesium</keyword>
<keyword id="KW-0479">Metal-binding</keyword>
<keyword id="KW-0547">Nucleotide-binding</keyword>
<keyword id="KW-0648">Protein biosynthesis</keyword>
<keyword id="KW-1185">Reference proteome</keyword>
<evidence type="ECO:0000255" key="1">
    <source>
        <dbReference type="HAMAP-Rule" id="MF_00281"/>
    </source>
</evidence>
<dbReference type="EC" id="6.1.1.20" evidence="1"/>
<dbReference type="EMBL" id="AP009389">
    <property type="protein sequence ID" value="BAF60131.1"/>
    <property type="molecule type" value="Genomic_DNA"/>
</dbReference>
<dbReference type="SMR" id="A5D0U1"/>
<dbReference type="STRING" id="370438.PTH_1950"/>
<dbReference type="KEGG" id="pth:PTH_1950"/>
<dbReference type="eggNOG" id="COG0016">
    <property type="taxonomic scope" value="Bacteria"/>
</dbReference>
<dbReference type="HOGENOM" id="CLU_025086_0_1_9"/>
<dbReference type="Proteomes" id="UP000006556">
    <property type="component" value="Chromosome"/>
</dbReference>
<dbReference type="GO" id="GO:0005737">
    <property type="term" value="C:cytoplasm"/>
    <property type="evidence" value="ECO:0007669"/>
    <property type="project" value="UniProtKB-SubCell"/>
</dbReference>
<dbReference type="GO" id="GO:0005524">
    <property type="term" value="F:ATP binding"/>
    <property type="evidence" value="ECO:0007669"/>
    <property type="project" value="UniProtKB-UniRule"/>
</dbReference>
<dbReference type="GO" id="GO:0140096">
    <property type="term" value="F:catalytic activity, acting on a protein"/>
    <property type="evidence" value="ECO:0007669"/>
    <property type="project" value="UniProtKB-ARBA"/>
</dbReference>
<dbReference type="GO" id="GO:0000287">
    <property type="term" value="F:magnesium ion binding"/>
    <property type="evidence" value="ECO:0007669"/>
    <property type="project" value="UniProtKB-UniRule"/>
</dbReference>
<dbReference type="GO" id="GO:0004826">
    <property type="term" value="F:phenylalanine-tRNA ligase activity"/>
    <property type="evidence" value="ECO:0007669"/>
    <property type="project" value="UniProtKB-UniRule"/>
</dbReference>
<dbReference type="GO" id="GO:0016740">
    <property type="term" value="F:transferase activity"/>
    <property type="evidence" value="ECO:0007669"/>
    <property type="project" value="UniProtKB-ARBA"/>
</dbReference>
<dbReference type="GO" id="GO:0000049">
    <property type="term" value="F:tRNA binding"/>
    <property type="evidence" value="ECO:0007669"/>
    <property type="project" value="InterPro"/>
</dbReference>
<dbReference type="GO" id="GO:0006432">
    <property type="term" value="P:phenylalanyl-tRNA aminoacylation"/>
    <property type="evidence" value="ECO:0007669"/>
    <property type="project" value="UniProtKB-UniRule"/>
</dbReference>
<dbReference type="CDD" id="cd00496">
    <property type="entry name" value="PheRS_alpha_core"/>
    <property type="match status" value="1"/>
</dbReference>
<dbReference type="FunFam" id="3.30.930.10:FF:000003">
    <property type="entry name" value="Phenylalanine--tRNA ligase alpha subunit"/>
    <property type="match status" value="1"/>
</dbReference>
<dbReference type="Gene3D" id="3.30.930.10">
    <property type="entry name" value="Bira Bifunctional Protein, Domain 2"/>
    <property type="match status" value="1"/>
</dbReference>
<dbReference type="HAMAP" id="MF_00281">
    <property type="entry name" value="Phe_tRNA_synth_alpha1"/>
    <property type="match status" value="1"/>
</dbReference>
<dbReference type="InterPro" id="IPR006195">
    <property type="entry name" value="aa-tRNA-synth_II"/>
</dbReference>
<dbReference type="InterPro" id="IPR045864">
    <property type="entry name" value="aa-tRNA-synth_II/BPL/LPL"/>
</dbReference>
<dbReference type="InterPro" id="IPR004529">
    <property type="entry name" value="Phe-tRNA-synth_IIc_asu"/>
</dbReference>
<dbReference type="InterPro" id="IPR004188">
    <property type="entry name" value="Phe-tRNA_ligase_II_N"/>
</dbReference>
<dbReference type="InterPro" id="IPR022911">
    <property type="entry name" value="Phe_tRNA_ligase_alpha1_bac"/>
</dbReference>
<dbReference type="InterPro" id="IPR002319">
    <property type="entry name" value="Phenylalanyl-tRNA_Synthase"/>
</dbReference>
<dbReference type="InterPro" id="IPR010978">
    <property type="entry name" value="tRNA-bd_arm"/>
</dbReference>
<dbReference type="NCBIfam" id="TIGR00468">
    <property type="entry name" value="pheS"/>
    <property type="match status" value="1"/>
</dbReference>
<dbReference type="PANTHER" id="PTHR11538:SF41">
    <property type="entry name" value="PHENYLALANINE--TRNA LIGASE, MITOCHONDRIAL"/>
    <property type="match status" value="1"/>
</dbReference>
<dbReference type="PANTHER" id="PTHR11538">
    <property type="entry name" value="PHENYLALANYL-TRNA SYNTHETASE"/>
    <property type="match status" value="1"/>
</dbReference>
<dbReference type="Pfam" id="PF02912">
    <property type="entry name" value="Phe_tRNA-synt_N"/>
    <property type="match status" value="1"/>
</dbReference>
<dbReference type="Pfam" id="PF01409">
    <property type="entry name" value="tRNA-synt_2d"/>
    <property type="match status" value="1"/>
</dbReference>
<dbReference type="SUPFAM" id="SSF55681">
    <property type="entry name" value="Class II aaRS and biotin synthetases"/>
    <property type="match status" value="1"/>
</dbReference>
<dbReference type="SUPFAM" id="SSF46589">
    <property type="entry name" value="tRNA-binding arm"/>
    <property type="match status" value="1"/>
</dbReference>
<dbReference type="PROSITE" id="PS50862">
    <property type="entry name" value="AA_TRNA_LIGASE_II"/>
    <property type="match status" value="1"/>
</dbReference>
<organism>
    <name type="scientific">Pelotomaculum thermopropionicum (strain DSM 13744 / JCM 10971 / SI)</name>
    <dbReference type="NCBI Taxonomy" id="370438"/>
    <lineage>
        <taxon>Bacteria</taxon>
        <taxon>Bacillati</taxon>
        <taxon>Bacillota</taxon>
        <taxon>Clostridia</taxon>
        <taxon>Eubacteriales</taxon>
        <taxon>Desulfotomaculaceae</taxon>
        <taxon>Pelotomaculum</taxon>
    </lineage>
</organism>
<protein>
    <recommendedName>
        <fullName evidence="1">Phenylalanine--tRNA ligase alpha subunit</fullName>
        <ecNumber evidence="1">6.1.1.20</ecNumber>
    </recommendedName>
    <alternativeName>
        <fullName evidence="1">Phenylalanyl-tRNA synthetase alpha subunit</fullName>
        <shortName evidence="1">PheRS</shortName>
    </alternativeName>
</protein>
<comment type="catalytic activity">
    <reaction evidence="1">
        <text>tRNA(Phe) + L-phenylalanine + ATP = L-phenylalanyl-tRNA(Phe) + AMP + diphosphate + H(+)</text>
        <dbReference type="Rhea" id="RHEA:19413"/>
        <dbReference type="Rhea" id="RHEA-COMP:9668"/>
        <dbReference type="Rhea" id="RHEA-COMP:9699"/>
        <dbReference type="ChEBI" id="CHEBI:15378"/>
        <dbReference type="ChEBI" id="CHEBI:30616"/>
        <dbReference type="ChEBI" id="CHEBI:33019"/>
        <dbReference type="ChEBI" id="CHEBI:58095"/>
        <dbReference type="ChEBI" id="CHEBI:78442"/>
        <dbReference type="ChEBI" id="CHEBI:78531"/>
        <dbReference type="ChEBI" id="CHEBI:456215"/>
        <dbReference type="EC" id="6.1.1.20"/>
    </reaction>
</comment>
<comment type="cofactor">
    <cofactor evidence="1">
        <name>Mg(2+)</name>
        <dbReference type="ChEBI" id="CHEBI:18420"/>
    </cofactor>
    <text evidence="1">Binds 2 magnesium ions per tetramer.</text>
</comment>
<comment type="subunit">
    <text evidence="1">Tetramer of two alpha and two beta subunits.</text>
</comment>
<comment type="subcellular location">
    <subcellularLocation>
        <location evidence="1">Cytoplasm</location>
    </subcellularLocation>
</comment>
<comment type="similarity">
    <text evidence="1">Belongs to the class-II aminoacyl-tRNA synthetase family. Phe-tRNA synthetase alpha subunit type 1 subfamily.</text>
</comment>